<sequence length="162" mass="18230">MNTKFPITAKGFKKLEHELKHLKHVERKKISEDIAEAREHGDLSENAEYEAAREKQAFIEGRIKELEDMTARAEIIDICKLSGDNIKFGATVTLIDDDTEEEVTYIIVGEYEADITKKRVSIASPIAKALIGKSVGDFVEVTTPKGLKSYEVVTVEYKELDL</sequence>
<proteinExistence type="inferred from homology"/>
<evidence type="ECO:0000255" key="1">
    <source>
        <dbReference type="HAMAP-Rule" id="MF_00105"/>
    </source>
</evidence>
<keyword id="KW-0175">Coiled coil</keyword>
<keyword id="KW-0238">DNA-binding</keyword>
<keyword id="KW-1185">Reference proteome</keyword>
<keyword id="KW-0804">Transcription</keyword>
<keyword id="KW-0805">Transcription regulation</keyword>
<reference key="1">
    <citation type="journal article" date="1992" name="Nucleic Acids Res.">
        <title>Nucleotide sequence of the Rickettsia prowazekii greA homolog.</title>
        <authorList>
            <person name="Marks G.L."/>
            <person name="Wood D.O."/>
        </authorList>
    </citation>
    <scope>NUCLEOTIDE SEQUENCE [GENOMIC DNA]</scope>
    <source>
        <strain>Madrid E</strain>
    </source>
</reference>
<reference key="2">
    <citation type="journal article" date="1997" name="J. Bacteriol.">
        <title>Transcriptional characterization of the Rickettsia prowazekii major macromolecular synthesis operon.</title>
        <authorList>
            <person name="Shaw E.I."/>
            <person name="Marks G.L."/>
            <person name="Winkler H.H."/>
            <person name="Wood D.O."/>
        </authorList>
    </citation>
    <scope>NUCLEOTIDE SEQUENCE [GENOMIC DNA]</scope>
    <source>
        <strain>Madrid E</strain>
    </source>
</reference>
<reference key="3">
    <citation type="journal article" date="1998" name="Nature">
        <title>The genome sequence of Rickettsia prowazekii and the origin of mitochondria.</title>
        <authorList>
            <person name="Andersson S.G.E."/>
            <person name="Zomorodipour A."/>
            <person name="Andersson J.O."/>
            <person name="Sicheritz-Ponten T."/>
            <person name="Alsmark U.C.M."/>
            <person name="Podowski R.M."/>
            <person name="Naeslund A.K."/>
            <person name="Eriksson A.-S."/>
            <person name="Winkler H.H."/>
            <person name="Kurland C.G."/>
        </authorList>
    </citation>
    <scope>NUCLEOTIDE SEQUENCE [LARGE SCALE GENOMIC DNA]</scope>
    <source>
        <strain>Madrid E</strain>
    </source>
</reference>
<dbReference type="EMBL" id="Z12122">
    <property type="protein sequence ID" value="CAA78107.1"/>
    <property type="molecule type" value="Genomic_DNA"/>
</dbReference>
<dbReference type="EMBL" id="U02878">
    <property type="protein sequence ID" value="AAB81401.1"/>
    <property type="molecule type" value="Unassigned_DNA"/>
</dbReference>
<dbReference type="EMBL" id="AJ235273">
    <property type="protein sequence ID" value="CAA15285.1"/>
    <property type="molecule type" value="Genomic_DNA"/>
</dbReference>
<dbReference type="PIR" id="S26176">
    <property type="entry name" value="S26176"/>
</dbReference>
<dbReference type="RefSeq" id="NP_221209.1">
    <property type="nucleotide sequence ID" value="NC_000963.1"/>
</dbReference>
<dbReference type="RefSeq" id="WP_004596757.1">
    <property type="nucleotide sequence ID" value="NC_000963.1"/>
</dbReference>
<dbReference type="SMR" id="P27640"/>
<dbReference type="STRING" id="272947.gene:17555930"/>
<dbReference type="EnsemblBacteria" id="CAA15285">
    <property type="protein sequence ID" value="CAA15285"/>
    <property type="gene ID" value="CAA15285"/>
</dbReference>
<dbReference type="GeneID" id="57569984"/>
<dbReference type="KEGG" id="rpr:RP861"/>
<dbReference type="PATRIC" id="fig|272947.5.peg.900"/>
<dbReference type="eggNOG" id="COG0782">
    <property type="taxonomic scope" value="Bacteria"/>
</dbReference>
<dbReference type="HOGENOM" id="CLU_101379_2_0_5"/>
<dbReference type="OrthoDB" id="9808774at2"/>
<dbReference type="Proteomes" id="UP000002480">
    <property type="component" value="Chromosome"/>
</dbReference>
<dbReference type="GO" id="GO:0003677">
    <property type="term" value="F:DNA binding"/>
    <property type="evidence" value="ECO:0007669"/>
    <property type="project" value="UniProtKB-UniRule"/>
</dbReference>
<dbReference type="GO" id="GO:0070063">
    <property type="term" value="F:RNA polymerase binding"/>
    <property type="evidence" value="ECO:0007669"/>
    <property type="project" value="InterPro"/>
</dbReference>
<dbReference type="GO" id="GO:0006354">
    <property type="term" value="P:DNA-templated transcription elongation"/>
    <property type="evidence" value="ECO:0007669"/>
    <property type="project" value="TreeGrafter"/>
</dbReference>
<dbReference type="GO" id="GO:0032784">
    <property type="term" value="P:regulation of DNA-templated transcription elongation"/>
    <property type="evidence" value="ECO:0007669"/>
    <property type="project" value="UniProtKB-UniRule"/>
</dbReference>
<dbReference type="FunFam" id="1.10.287.180:FF:000001">
    <property type="entry name" value="Transcription elongation factor GreA"/>
    <property type="match status" value="1"/>
</dbReference>
<dbReference type="FunFam" id="3.10.50.30:FF:000001">
    <property type="entry name" value="Transcription elongation factor GreA"/>
    <property type="match status" value="1"/>
</dbReference>
<dbReference type="Gene3D" id="3.10.50.30">
    <property type="entry name" value="Transcription elongation factor, GreA/GreB, C-terminal domain"/>
    <property type="match status" value="1"/>
</dbReference>
<dbReference type="Gene3D" id="1.10.287.180">
    <property type="entry name" value="Transcription elongation factor, GreA/GreB, N-terminal domain"/>
    <property type="match status" value="1"/>
</dbReference>
<dbReference type="HAMAP" id="MF_00105">
    <property type="entry name" value="GreA_GreB"/>
    <property type="match status" value="1"/>
</dbReference>
<dbReference type="InterPro" id="IPR036953">
    <property type="entry name" value="GreA/GreB_C_sf"/>
</dbReference>
<dbReference type="InterPro" id="IPR018151">
    <property type="entry name" value="TF_GreA/GreB_CS"/>
</dbReference>
<dbReference type="InterPro" id="IPR006359">
    <property type="entry name" value="Tscrpt_elong_fac_GreA"/>
</dbReference>
<dbReference type="InterPro" id="IPR028624">
    <property type="entry name" value="Tscrpt_elong_fac_GreA/B"/>
</dbReference>
<dbReference type="InterPro" id="IPR001437">
    <property type="entry name" value="Tscrpt_elong_fac_GreA/B_C"/>
</dbReference>
<dbReference type="InterPro" id="IPR023459">
    <property type="entry name" value="Tscrpt_elong_fac_GreA/B_fam"/>
</dbReference>
<dbReference type="InterPro" id="IPR022691">
    <property type="entry name" value="Tscrpt_elong_fac_GreA/B_N"/>
</dbReference>
<dbReference type="InterPro" id="IPR036805">
    <property type="entry name" value="Tscrpt_elong_fac_GreA/B_N_sf"/>
</dbReference>
<dbReference type="NCBIfam" id="TIGR01462">
    <property type="entry name" value="greA"/>
    <property type="match status" value="1"/>
</dbReference>
<dbReference type="NCBIfam" id="NF001261">
    <property type="entry name" value="PRK00226.1-2"/>
    <property type="match status" value="1"/>
</dbReference>
<dbReference type="NCBIfam" id="NF001263">
    <property type="entry name" value="PRK00226.1-4"/>
    <property type="match status" value="1"/>
</dbReference>
<dbReference type="NCBIfam" id="NF001264">
    <property type="entry name" value="PRK00226.1-5"/>
    <property type="match status" value="1"/>
</dbReference>
<dbReference type="PANTHER" id="PTHR30437">
    <property type="entry name" value="TRANSCRIPTION ELONGATION FACTOR GREA"/>
    <property type="match status" value="1"/>
</dbReference>
<dbReference type="PANTHER" id="PTHR30437:SF4">
    <property type="entry name" value="TRANSCRIPTION ELONGATION FACTOR GREA"/>
    <property type="match status" value="1"/>
</dbReference>
<dbReference type="Pfam" id="PF01272">
    <property type="entry name" value="GreA_GreB"/>
    <property type="match status" value="1"/>
</dbReference>
<dbReference type="Pfam" id="PF03449">
    <property type="entry name" value="GreA_GreB_N"/>
    <property type="match status" value="1"/>
</dbReference>
<dbReference type="PIRSF" id="PIRSF006092">
    <property type="entry name" value="GreA_GreB"/>
    <property type="match status" value="1"/>
</dbReference>
<dbReference type="SUPFAM" id="SSF54534">
    <property type="entry name" value="FKBP-like"/>
    <property type="match status" value="1"/>
</dbReference>
<dbReference type="SUPFAM" id="SSF46557">
    <property type="entry name" value="GreA transcript cleavage protein, N-terminal domain"/>
    <property type="match status" value="1"/>
</dbReference>
<dbReference type="PROSITE" id="PS00829">
    <property type="entry name" value="GREAB_1"/>
    <property type="match status" value="1"/>
</dbReference>
<dbReference type="PROSITE" id="PS00830">
    <property type="entry name" value="GREAB_2"/>
    <property type="match status" value="1"/>
</dbReference>
<accession>P27640</accession>
<protein>
    <recommendedName>
        <fullName evidence="1">Transcription elongation factor GreA</fullName>
    </recommendedName>
    <alternativeName>
        <fullName evidence="1">Transcript cleavage factor GreA</fullName>
    </alternativeName>
</protein>
<gene>
    <name evidence="1" type="primary">greA</name>
    <name type="ordered locus">RP861</name>
</gene>
<name>GREA_RICPR</name>
<organism>
    <name type="scientific">Rickettsia prowazekii (strain Madrid E)</name>
    <dbReference type="NCBI Taxonomy" id="272947"/>
    <lineage>
        <taxon>Bacteria</taxon>
        <taxon>Pseudomonadati</taxon>
        <taxon>Pseudomonadota</taxon>
        <taxon>Alphaproteobacteria</taxon>
        <taxon>Rickettsiales</taxon>
        <taxon>Rickettsiaceae</taxon>
        <taxon>Rickettsieae</taxon>
        <taxon>Rickettsia</taxon>
        <taxon>typhus group</taxon>
    </lineage>
</organism>
<feature type="chain" id="PRO_0000176964" description="Transcription elongation factor GreA">
    <location>
        <begin position="1"/>
        <end position="162"/>
    </location>
</feature>
<feature type="coiled-coil region" evidence="1">
    <location>
        <begin position="45"/>
        <end position="74"/>
    </location>
</feature>
<comment type="function">
    <text evidence="1">Necessary for efficient RNA polymerase transcription elongation past template-encoded arresting sites. The arresting sites in DNA have the property of trapping a certain fraction of elongating RNA polymerases that pass through, resulting in locked ternary complexes. Cleavage of the nascent transcript by cleavage factors such as GreA or GreB allows the resumption of elongation from the new 3'terminus. GreA releases sequences of 2 to 3 nucleotides.</text>
</comment>
<comment type="similarity">
    <text evidence="1">Belongs to the GreA/GreB family.</text>
</comment>